<feature type="signal peptide" evidence="1">
    <location>
        <begin position="1"/>
        <end position="22"/>
    </location>
</feature>
<feature type="peptide" id="PRO_0000006964" description="Beta-defensin 2">
    <location>
        <begin position="23"/>
        <end position="64"/>
    </location>
</feature>
<feature type="disulfide bond" evidence="1">
    <location>
        <begin position="31"/>
        <end position="60"/>
    </location>
</feature>
<feature type="disulfide bond" evidence="1">
    <location>
        <begin position="38"/>
        <end position="53"/>
    </location>
</feature>
<feature type="disulfide bond" evidence="1">
    <location>
        <begin position="43"/>
        <end position="61"/>
    </location>
</feature>
<comment type="function">
    <text evidence="1">Has bactericidal activity.</text>
</comment>
<comment type="subcellular location">
    <subcellularLocation>
        <location evidence="1">Secreted</location>
    </subcellularLocation>
</comment>
<comment type="similarity">
    <text evidence="2">Belongs to the beta-defensin family.</text>
</comment>
<dbReference type="EMBL" id="U75251">
    <property type="protein sequence ID" value="AAB61996.1"/>
    <property type="molecule type" value="Genomic_DNA"/>
</dbReference>
<dbReference type="SMR" id="O19039"/>
<dbReference type="STRING" id="9940.ENSOARP00000006894"/>
<dbReference type="PaxDb" id="9940-ENSOARP00000006894"/>
<dbReference type="Ensembl" id="ENSOART00040039093">
    <property type="protein sequence ID" value="ENSOARP00040019867"/>
    <property type="gene ID" value="ENSOARG00040023580"/>
</dbReference>
<dbReference type="Ensembl" id="ENSOART00040039099">
    <property type="protein sequence ID" value="ENSOARP00040019871"/>
    <property type="gene ID" value="ENSOARG00040023582"/>
</dbReference>
<dbReference type="Ensembl" id="ENSOART00180035818">
    <property type="protein sequence ID" value="ENSOARP00180018619"/>
    <property type="gene ID" value="ENSOARG00180021626"/>
</dbReference>
<dbReference type="Ensembl" id="ENSOART00180035827">
    <property type="protein sequence ID" value="ENSOARP00180018628"/>
    <property type="gene ID" value="ENSOARG00180021632"/>
</dbReference>
<dbReference type="Ensembl" id="ENSOART00185024678">
    <property type="protein sequence ID" value="ENSOARP00185011394"/>
    <property type="gene ID" value="ENSOARG00185015302"/>
</dbReference>
<dbReference type="Ensembl" id="ENSOART00185024687">
    <property type="protein sequence ID" value="ENSOARP00185011400"/>
    <property type="gene ID" value="ENSOARG00185015308"/>
</dbReference>
<dbReference type="Ensembl" id="ENSOART00215018628">
    <property type="protein sequence ID" value="ENSOARP00215009315"/>
    <property type="gene ID" value="ENSOARG00215011246"/>
</dbReference>
<dbReference type="Ensembl" id="ENSOART00220074207">
    <property type="protein sequence ID" value="ENSOARP00220039827"/>
    <property type="gene ID" value="ENSOARG00220044748"/>
</dbReference>
<dbReference type="Ensembl" id="ENSOART00220074226">
    <property type="protein sequence ID" value="ENSOARP00220039833"/>
    <property type="gene ID" value="ENSOARG00220044758"/>
</dbReference>
<dbReference type="HOGENOM" id="CLU_189296_4_1_1"/>
<dbReference type="OMA" id="HRSCHRI"/>
<dbReference type="OrthoDB" id="9714396at2759"/>
<dbReference type="Proteomes" id="UP000002356">
    <property type="component" value="Chromosome 26"/>
</dbReference>
<dbReference type="Bgee" id="ENSOARG00000006442">
    <property type="expression patterns" value="Expressed in jejunum and 48 other cell types or tissues"/>
</dbReference>
<dbReference type="ExpressionAtlas" id="O19039">
    <property type="expression patterns" value="baseline"/>
</dbReference>
<dbReference type="GO" id="GO:0005615">
    <property type="term" value="C:extracellular space"/>
    <property type="evidence" value="ECO:0007669"/>
    <property type="project" value="TreeGrafter"/>
</dbReference>
<dbReference type="GO" id="GO:0031731">
    <property type="term" value="F:CCR6 chemokine receptor binding"/>
    <property type="evidence" value="ECO:0007669"/>
    <property type="project" value="TreeGrafter"/>
</dbReference>
<dbReference type="GO" id="GO:0042056">
    <property type="term" value="F:chemoattractant activity"/>
    <property type="evidence" value="ECO:0007669"/>
    <property type="project" value="TreeGrafter"/>
</dbReference>
<dbReference type="GO" id="GO:0060326">
    <property type="term" value="P:cell chemotaxis"/>
    <property type="evidence" value="ECO:0007669"/>
    <property type="project" value="TreeGrafter"/>
</dbReference>
<dbReference type="GO" id="GO:0042742">
    <property type="term" value="P:defense response to bacterium"/>
    <property type="evidence" value="ECO:0007669"/>
    <property type="project" value="UniProtKB-KW"/>
</dbReference>
<dbReference type="FunFam" id="3.10.360.10:FF:000001">
    <property type="entry name" value="Beta-defensin 1"/>
    <property type="match status" value="1"/>
</dbReference>
<dbReference type="Gene3D" id="3.10.360.10">
    <property type="entry name" value="Antimicrobial Peptide, Beta-defensin 2, Chain A"/>
    <property type="match status" value="1"/>
</dbReference>
<dbReference type="InterPro" id="IPR006080">
    <property type="entry name" value="Beta/alpha-defensin_C"/>
</dbReference>
<dbReference type="InterPro" id="IPR001855">
    <property type="entry name" value="Defensin_beta-like"/>
</dbReference>
<dbReference type="PANTHER" id="PTHR20515">
    <property type="entry name" value="BETA-DEFENSIN"/>
    <property type="match status" value="1"/>
</dbReference>
<dbReference type="PANTHER" id="PTHR20515:SF2">
    <property type="entry name" value="DEFENSIN BETA 4A"/>
    <property type="match status" value="1"/>
</dbReference>
<dbReference type="Pfam" id="PF00711">
    <property type="entry name" value="Defensin_beta"/>
    <property type="match status" value="1"/>
</dbReference>
<dbReference type="SMART" id="SM00048">
    <property type="entry name" value="DEFSN"/>
    <property type="match status" value="1"/>
</dbReference>
<dbReference type="SUPFAM" id="SSF57392">
    <property type="entry name" value="Defensin-like"/>
    <property type="match status" value="1"/>
</dbReference>
<evidence type="ECO:0000250" key="1"/>
<evidence type="ECO:0000305" key="2"/>
<reference key="1">
    <citation type="journal article" date="1998" name="J. Nutr.">
        <title>Antimicrobial peptide expression is developmentally regulated in the ovine gastrointestinal tract.</title>
        <authorList>
            <person name="Huttner K.M."/>
            <person name="Brezinski-Caliguri D.J."/>
            <person name="Mahoney M.M."/>
            <person name="Diamond G."/>
        </authorList>
    </citation>
    <scope>NUCLEOTIDE SEQUENCE [GENOMIC DNA]</scope>
</reference>
<reference key="2">
    <citation type="journal article" date="1998" name="Gene">
        <title>Localization and genomic organization of sheep antimicrobial peptides genes.</title>
        <authorList>
            <person name="Huttner K.M."/>
            <person name="Lambeth M.R."/>
            <person name="Burkin H.R."/>
            <person name="Broad T.E."/>
        </authorList>
    </citation>
    <scope>NUCLEOTIDE SEQUENCE [GENOMIC DNA]</scope>
    <source>
        <tissue>Trachea</tissue>
    </source>
</reference>
<protein>
    <recommendedName>
        <fullName>Beta-defensin 2</fullName>
        <shortName>BD-2</shortName>
    </recommendedName>
    <alternativeName>
        <fullName>sBD2</fullName>
    </alternativeName>
</protein>
<accession>O19039</accession>
<organism>
    <name type="scientific">Ovis aries</name>
    <name type="common">Sheep</name>
    <dbReference type="NCBI Taxonomy" id="9940"/>
    <lineage>
        <taxon>Eukaryota</taxon>
        <taxon>Metazoa</taxon>
        <taxon>Chordata</taxon>
        <taxon>Craniata</taxon>
        <taxon>Vertebrata</taxon>
        <taxon>Euteleostomi</taxon>
        <taxon>Mammalia</taxon>
        <taxon>Eutheria</taxon>
        <taxon>Laurasiatheria</taxon>
        <taxon>Artiodactyla</taxon>
        <taxon>Ruminantia</taxon>
        <taxon>Pecora</taxon>
        <taxon>Bovidae</taxon>
        <taxon>Caprinae</taxon>
        <taxon>Ovis</taxon>
    </lineage>
</organism>
<proteinExistence type="inferred from homology"/>
<gene>
    <name type="primary">DEFB2</name>
    <name type="synonym">BD2</name>
</gene>
<sequence>MRLHHLLLVLFFVVLSAGSGFTHGVTDSLSCRWKKGICVLTRCPGTMRQIGTCFGPPVKCCRLK</sequence>
<name>DEFB2_SHEEP</name>
<keyword id="KW-0044">Antibiotic</keyword>
<keyword id="KW-0929">Antimicrobial</keyword>
<keyword id="KW-0211">Defensin</keyword>
<keyword id="KW-1015">Disulfide bond</keyword>
<keyword id="KW-1185">Reference proteome</keyword>
<keyword id="KW-0964">Secreted</keyword>
<keyword id="KW-0732">Signal</keyword>